<comment type="function">
    <text evidence="1">Allows the formation of correctly charged Gln-tRNA(Gln) through the transamidation of misacylated Glu-tRNA(Gln) in the mitochondria. The reaction takes place in the presence of glutamine and ATP through an activated gamma-phospho-Glu-tRNA(Gln). Required for proper protein synthesis within the mitochondrion.</text>
</comment>
<comment type="catalytic activity">
    <reaction evidence="1">
        <text>L-glutamyl-tRNA(Gln) + L-glutamine + ATP + H2O = L-glutaminyl-tRNA(Gln) + L-glutamate + ADP + phosphate + H(+)</text>
        <dbReference type="Rhea" id="RHEA:17521"/>
        <dbReference type="Rhea" id="RHEA-COMP:9681"/>
        <dbReference type="Rhea" id="RHEA-COMP:9684"/>
        <dbReference type="ChEBI" id="CHEBI:15377"/>
        <dbReference type="ChEBI" id="CHEBI:15378"/>
        <dbReference type="ChEBI" id="CHEBI:29985"/>
        <dbReference type="ChEBI" id="CHEBI:30616"/>
        <dbReference type="ChEBI" id="CHEBI:43474"/>
        <dbReference type="ChEBI" id="CHEBI:58359"/>
        <dbReference type="ChEBI" id="CHEBI:78520"/>
        <dbReference type="ChEBI" id="CHEBI:78521"/>
        <dbReference type="ChEBI" id="CHEBI:456216"/>
    </reaction>
</comment>
<comment type="subunit">
    <text evidence="1">Subunit of the heterotrimeric GatFAB amidotransferase (AdT) complex, composed of A, B and F subunits.</text>
</comment>
<comment type="subcellular location">
    <subcellularLocation>
        <location evidence="1">Mitochondrion inner membrane</location>
        <topology evidence="1">Peripheral membrane protein</topology>
        <orientation evidence="1">Matrix side</orientation>
    </subcellularLocation>
</comment>
<comment type="similarity">
    <text evidence="1">Belongs to the GatF family.</text>
</comment>
<reference key="1">
    <citation type="journal article" date="2009" name="Genome Res.">
        <title>Comparative genomics of protoploid Saccharomycetaceae.</title>
        <authorList>
            <consortium name="The Genolevures Consortium"/>
            <person name="Souciet J.-L."/>
            <person name="Dujon B."/>
            <person name="Gaillardin C."/>
            <person name="Johnston M."/>
            <person name="Baret P.V."/>
            <person name="Cliften P."/>
            <person name="Sherman D.J."/>
            <person name="Weissenbach J."/>
            <person name="Westhof E."/>
            <person name="Wincker P."/>
            <person name="Jubin C."/>
            <person name="Poulain J."/>
            <person name="Barbe V."/>
            <person name="Segurens B."/>
            <person name="Artiguenave F."/>
            <person name="Anthouard V."/>
            <person name="Vacherie B."/>
            <person name="Val M.-E."/>
            <person name="Fulton R.S."/>
            <person name="Minx P."/>
            <person name="Wilson R."/>
            <person name="Durrens P."/>
            <person name="Jean G."/>
            <person name="Marck C."/>
            <person name="Martin T."/>
            <person name="Nikolski M."/>
            <person name="Rolland T."/>
            <person name="Seret M.-L."/>
            <person name="Casaregola S."/>
            <person name="Despons L."/>
            <person name="Fairhead C."/>
            <person name="Fischer G."/>
            <person name="Lafontaine I."/>
            <person name="Leh V."/>
            <person name="Lemaire M."/>
            <person name="de Montigny J."/>
            <person name="Neuveglise C."/>
            <person name="Thierry A."/>
            <person name="Blanc-Lenfle I."/>
            <person name="Bleykasten C."/>
            <person name="Diffels J."/>
            <person name="Fritsch E."/>
            <person name="Frangeul L."/>
            <person name="Goeffon A."/>
            <person name="Jauniaux N."/>
            <person name="Kachouri-Lafond R."/>
            <person name="Payen C."/>
            <person name="Potier S."/>
            <person name="Pribylova L."/>
            <person name="Ozanne C."/>
            <person name="Richard G.-F."/>
            <person name="Sacerdot C."/>
            <person name="Straub M.-L."/>
            <person name="Talla E."/>
        </authorList>
    </citation>
    <scope>NUCLEOTIDE SEQUENCE [LARGE SCALE GENOMIC DNA]</scope>
    <source>
        <strain>ATCC 56472 / CBS 6340 / NRRL Y-8284</strain>
    </source>
</reference>
<dbReference type="EC" id="6.3.5.-" evidence="1"/>
<dbReference type="EMBL" id="CU928169">
    <property type="protein sequence ID" value="CAR23277.1"/>
    <property type="molecule type" value="Genomic_DNA"/>
</dbReference>
<dbReference type="RefSeq" id="XP_002553714.1">
    <property type="nucleotide sequence ID" value="XM_002553668.1"/>
</dbReference>
<dbReference type="SMR" id="C5DHL6"/>
<dbReference type="FunCoup" id="C5DHL6">
    <property type="interactions" value="87"/>
</dbReference>
<dbReference type="STRING" id="559295.C5DHL6"/>
<dbReference type="GeneID" id="8291867"/>
<dbReference type="KEGG" id="lth:KLTH0E05368g"/>
<dbReference type="eggNOG" id="ENOG502S3RS">
    <property type="taxonomic scope" value="Eukaryota"/>
</dbReference>
<dbReference type="HOGENOM" id="CLU_120617_0_0_1"/>
<dbReference type="InParanoid" id="C5DHL6"/>
<dbReference type="OMA" id="WRLCRTH"/>
<dbReference type="OrthoDB" id="4053592at2759"/>
<dbReference type="Proteomes" id="UP000002036">
    <property type="component" value="Chromosome E"/>
</dbReference>
<dbReference type="GO" id="GO:0030956">
    <property type="term" value="C:glutamyl-tRNA(Gln) amidotransferase complex"/>
    <property type="evidence" value="ECO:0007669"/>
    <property type="project" value="UniProtKB-UniRule"/>
</dbReference>
<dbReference type="GO" id="GO:0005743">
    <property type="term" value="C:mitochondrial inner membrane"/>
    <property type="evidence" value="ECO:0007669"/>
    <property type="project" value="UniProtKB-SubCell"/>
</dbReference>
<dbReference type="GO" id="GO:0005524">
    <property type="term" value="F:ATP binding"/>
    <property type="evidence" value="ECO:0007669"/>
    <property type="project" value="UniProtKB-KW"/>
</dbReference>
<dbReference type="GO" id="GO:0050567">
    <property type="term" value="F:glutaminyl-tRNA synthase (glutamine-hydrolyzing) activity"/>
    <property type="evidence" value="ECO:0007669"/>
    <property type="project" value="UniProtKB-UniRule"/>
</dbReference>
<dbReference type="GO" id="GO:0070681">
    <property type="term" value="P:glutaminyl-tRNAGln biosynthesis via transamidation"/>
    <property type="evidence" value="ECO:0007669"/>
    <property type="project" value="UniProtKB-UniRule"/>
</dbReference>
<dbReference type="GO" id="GO:0032543">
    <property type="term" value="P:mitochondrial translation"/>
    <property type="evidence" value="ECO:0007669"/>
    <property type="project" value="UniProtKB-UniRule"/>
</dbReference>
<dbReference type="CDD" id="cd21422">
    <property type="entry name" value="GatF"/>
    <property type="match status" value="1"/>
</dbReference>
<dbReference type="HAMAP" id="MF_03151">
    <property type="entry name" value="GatF"/>
    <property type="match status" value="1"/>
</dbReference>
<dbReference type="InterPro" id="IPR027499">
    <property type="entry name" value="GatF"/>
</dbReference>
<dbReference type="Pfam" id="PF20977">
    <property type="entry name" value="GatF"/>
    <property type="match status" value="1"/>
</dbReference>
<keyword id="KW-0067">ATP-binding</keyword>
<keyword id="KW-0436">Ligase</keyword>
<keyword id="KW-0472">Membrane</keyword>
<keyword id="KW-0496">Mitochondrion</keyword>
<keyword id="KW-0999">Mitochondrion inner membrane</keyword>
<keyword id="KW-0547">Nucleotide-binding</keyword>
<keyword id="KW-0648">Protein biosynthesis</keyword>
<keyword id="KW-1185">Reference proteome</keyword>
<keyword id="KW-0809">Transit peptide</keyword>
<feature type="transit peptide" description="Mitochondrion" evidence="1">
    <location>
        <begin position="1"/>
        <end position="19"/>
    </location>
</feature>
<feature type="chain" id="PRO_0000413403" description="Glutamyl-tRNA(Gln) amidotransferase subunit F, mitochondrial">
    <location>
        <begin position="20"/>
        <end position="175"/>
    </location>
</feature>
<gene>
    <name evidence="1" type="primary">GTF1</name>
    <name type="ordered locus">KLTH0E05368g</name>
</gene>
<name>GATF_LACTC</name>
<accession>C5DHL6</accession>
<protein>
    <recommendedName>
        <fullName evidence="1">Glutamyl-tRNA(Gln) amidotransferase subunit F, mitochondrial</fullName>
        <shortName evidence="1">Glu-AdT subunit F</shortName>
        <ecNumber evidence="1">6.3.5.-</ecNumber>
    </recommendedName>
</protein>
<sequence>MLKVSARHAPVLRLPRRFYAQKTRVVIGPRLKNLDEIKEYLGKPTWSVEKYLQSSSNGETQPPSRETVEKLLKLSGLPNENVEMFQATLGKQLAFINKVQSLPVDESLDPSHARIIDRNSEALDYESLSCSVEQQETEKDSKMGEVGGSWDGTGLAAISENGFYVLREGLLKNRK</sequence>
<evidence type="ECO:0000255" key="1">
    <source>
        <dbReference type="HAMAP-Rule" id="MF_03151"/>
    </source>
</evidence>
<organism>
    <name type="scientific">Lachancea thermotolerans (strain ATCC 56472 / CBS 6340 / NRRL Y-8284)</name>
    <name type="common">Yeast</name>
    <name type="synonym">Kluyveromyces thermotolerans</name>
    <dbReference type="NCBI Taxonomy" id="559295"/>
    <lineage>
        <taxon>Eukaryota</taxon>
        <taxon>Fungi</taxon>
        <taxon>Dikarya</taxon>
        <taxon>Ascomycota</taxon>
        <taxon>Saccharomycotina</taxon>
        <taxon>Saccharomycetes</taxon>
        <taxon>Saccharomycetales</taxon>
        <taxon>Saccharomycetaceae</taxon>
        <taxon>Lachancea</taxon>
    </lineage>
</organism>
<proteinExistence type="inferred from homology"/>